<comment type="function">
    <text evidence="1">Catalyzes the reversible phosphorylation of UMP to UDP.</text>
</comment>
<comment type="catalytic activity">
    <reaction evidence="1">
        <text>UMP + ATP = UDP + ADP</text>
        <dbReference type="Rhea" id="RHEA:24400"/>
        <dbReference type="ChEBI" id="CHEBI:30616"/>
        <dbReference type="ChEBI" id="CHEBI:57865"/>
        <dbReference type="ChEBI" id="CHEBI:58223"/>
        <dbReference type="ChEBI" id="CHEBI:456216"/>
        <dbReference type="EC" id="2.7.4.22"/>
    </reaction>
</comment>
<comment type="activity regulation">
    <text evidence="1">Inhibited by UTP.</text>
</comment>
<comment type="pathway">
    <text evidence="1">Pyrimidine metabolism; CTP biosynthesis via de novo pathway; UDP from UMP (UMPK route): step 1/1.</text>
</comment>
<comment type="subunit">
    <text evidence="1">Homohexamer.</text>
</comment>
<comment type="subcellular location">
    <subcellularLocation>
        <location evidence="1">Cytoplasm</location>
    </subcellularLocation>
</comment>
<comment type="similarity">
    <text evidence="1">Belongs to the UMP kinase family.</text>
</comment>
<organism>
    <name type="scientific">Chlamydia muridarum (strain MoPn / Nigg)</name>
    <dbReference type="NCBI Taxonomy" id="243161"/>
    <lineage>
        <taxon>Bacteria</taxon>
        <taxon>Pseudomonadati</taxon>
        <taxon>Chlamydiota</taxon>
        <taxon>Chlamydiia</taxon>
        <taxon>Chlamydiales</taxon>
        <taxon>Chlamydiaceae</taxon>
        <taxon>Chlamydia/Chlamydophila group</taxon>
        <taxon>Chlamydia</taxon>
    </lineage>
</organism>
<accession>P71147</accession>
<protein>
    <recommendedName>
        <fullName evidence="1">Uridylate kinase</fullName>
        <shortName evidence="1">UK</shortName>
        <ecNumber evidence="1">2.7.4.22</ecNumber>
    </recommendedName>
    <alternativeName>
        <fullName evidence="1">Uridine monophosphate kinase</fullName>
        <shortName evidence="1">UMP kinase</shortName>
        <shortName evidence="1">UMPK</shortName>
    </alternativeName>
</protein>
<dbReference type="EC" id="2.7.4.22" evidence="1"/>
<dbReference type="EMBL" id="U60196">
    <property type="protein sequence ID" value="AAB07071.1"/>
    <property type="molecule type" value="Genomic_DNA"/>
</dbReference>
<dbReference type="EMBL" id="AE002160">
    <property type="protein sequence ID" value="AAF38938.1"/>
    <property type="molecule type" value="Genomic_DNA"/>
</dbReference>
<dbReference type="PIR" id="H81746">
    <property type="entry name" value="H81746"/>
</dbReference>
<dbReference type="SMR" id="P71147"/>
<dbReference type="KEGG" id="cmu:TC_0049"/>
<dbReference type="eggNOG" id="COG0528">
    <property type="taxonomic scope" value="Bacteria"/>
</dbReference>
<dbReference type="HOGENOM" id="CLU_033861_0_1_0"/>
<dbReference type="OrthoDB" id="9807458at2"/>
<dbReference type="UniPathway" id="UPA00159">
    <property type="reaction ID" value="UER00275"/>
</dbReference>
<dbReference type="Proteomes" id="UP000000800">
    <property type="component" value="Chromosome"/>
</dbReference>
<dbReference type="GO" id="GO:0005737">
    <property type="term" value="C:cytoplasm"/>
    <property type="evidence" value="ECO:0007669"/>
    <property type="project" value="UniProtKB-SubCell"/>
</dbReference>
<dbReference type="GO" id="GO:0005524">
    <property type="term" value="F:ATP binding"/>
    <property type="evidence" value="ECO:0007669"/>
    <property type="project" value="UniProtKB-KW"/>
</dbReference>
<dbReference type="GO" id="GO:0033862">
    <property type="term" value="F:UMP kinase activity"/>
    <property type="evidence" value="ECO:0007669"/>
    <property type="project" value="UniProtKB-EC"/>
</dbReference>
<dbReference type="GO" id="GO:0044210">
    <property type="term" value="P:'de novo' CTP biosynthetic process"/>
    <property type="evidence" value="ECO:0007669"/>
    <property type="project" value="UniProtKB-UniRule"/>
</dbReference>
<dbReference type="GO" id="GO:0006225">
    <property type="term" value="P:UDP biosynthetic process"/>
    <property type="evidence" value="ECO:0007669"/>
    <property type="project" value="TreeGrafter"/>
</dbReference>
<dbReference type="CDD" id="cd04254">
    <property type="entry name" value="AAK_UMPK-PyrH-Ec"/>
    <property type="match status" value="1"/>
</dbReference>
<dbReference type="FunFam" id="3.40.1160.10:FF:000001">
    <property type="entry name" value="Uridylate kinase"/>
    <property type="match status" value="1"/>
</dbReference>
<dbReference type="Gene3D" id="3.40.1160.10">
    <property type="entry name" value="Acetylglutamate kinase-like"/>
    <property type="match status" value="1"/>
</dbReference>
<dbReference type="HAMAP" id="MF_01220_B">
    <property type="entry name" value="PyrH_B"/>
    <property type="match status" value="1"/>
</dbReference>
<dbReference type="InterPro" id="IPR036393">
    <property type="entry name" value="AceGlu_kinase-like_sf"/>
</dbReference>
<dbReference type="InterPro" id="IPR001048">
    <property type="entry name" value="Asp/Glu/Uridylate_kinase"/>
</dbReference>
<dbReference type="InterPro" id="IPR011817">
    <property type="entry name" value="Uridylate_kinase"/>
</dbReference>
<dbReference type="InterPro" id="IPR015963">
    <property type="entry name" value="Uridylate_kinase_bac"/>
</dbReference>
<dbReference type="NCBIfam" id="TIGR02075">
    <property type="entry name" value="pyrH_bact"/>
    <property type="match status" value="1"/>
</dbReference>
<dbReference type="PANTHER" id="PTHR42833">
    <property type="entry name" value="URIDYLATE KINASE"/>
    <property type="match status" value="1"/>
</dbReference>
<dbReference type="PANTHER" id="PTHR42833:SF4">
    <property type="entry name" value="URIDYLATE KINASE PUMPKIN, CHLOROPLASTIC"/>
    <property type="match status" value="1"/>
</dbReference>
<dbReference type="Pfam" id="PF00696">
    <property type="entry name" value="AA_kinase"/>
    <property type="match status" value="1"/>
</dbReference>
<dbReference type="PIRSF" id="PIRSF005650">
    <property type="entry name" value="Uridylate_kin"/>
    <property type="match status" value="1"/>
</dbReference>
<dbReference type="SUPFAM" id="SSF53633">
    <property type="entry name" value="Carbamate kinase-like"/>
    <property type="match status" value="1"/>
</dbReference>
<feature type="chain" id="PRO_0000143834" description="Uridylate kinase">
    <location>
        <begin position="1"/>
        <end position="245"/>
    </location>
</feature>
<feature type="binding site" evidence="1">
    <location>
        <begin position="12"/>
        <end position="15"/>
    </location>
    <ligand>
        <name>ATP</name>
        <dbReference type="ChEBI" id="CHEBI:30616"/>
    </ligand>
</feature>
<feature type="binding site" evidence="1">
    <location>
        <position position="55"/>
    </location>
    <ligand>
        <name>UMP</name>
        <dbReference type="ChEBI" id="CHEBI:57865"/>
    </ligand>
</feature>
<feature type="binding site" evidence="1">
    <location>
        <position position="56"/>
    </location>
    <ligand>
        <name>ATP</name>
        <dbReference type="ChEBI" id="CHEBI:30616"/>
    </ligand>
</feature>
<feature type="binding site" evidence="1">
    <location>
        <position position="60"/>
    </location>
    <ligand>
        <name>ATP</name>
        <dbReference type="ChEBI" id="CHEBI:30616"/>
    </ligand>
</feature>
<feature type="binding site" evidence="1">
    <location>
        <position position="76"/>
    </location>
    <ligand>
        <name>UMP</name>
        <dbReference type="ChEBI" id="CHEBI:57865"/>
    </ligand>
</feature>
<feature type="binding site" evidence="1">
    <location>
        <begin position="137"/>
        <end position="144"/>
    </location>
    <ligand>
        <name>UMP</name>
        <dbReference type="ChEBI" id="CHEBI:57865"/>
    </ligand>
</feature>
<feature type="binding site" evidence="1">
    <location>
        <position position="164"/>
    </location>
    <ligand>
        <name>ATP</name>
        <dbReference type="ChEBI" id="CHEBI:30616"/>
    </ligand>
</feature>
<feature type="binding site" evidence="1">
    <location>
        <position position="171"/>
    </location>
    <ligand>
        <name>ATP</name>
        <dbReference type="ChEBI" id="CHEBI:30616"/>
    </ligand>
</feature>
<feature type="binding site" evidence="1">
    <location>
        <position position="174"/>
    </location>
    <ligand>
        <name>ATP</name>
        <dbReference type="ChEBI" id="CHEBI:30616"/>
    </ligand>
</feature>
<reference key="1">
    <citation type="journal article" date="1997" name="Arch. Biochem. Biophys.">
        <title>Elongation factor Ts of Chlamydia trachomatis: structure of the gene and properties of the protein.</title>
        <authorList>
            <person name="Zhang Y.X."/>
            <person name="Tao J."/>
            <person name="Zhou M."/>
            <person name="Meng Q."/>
            <person name="Zhang L."/>
            <person name="Shen L."/>
            <person name="Klein R."/>
            <person name="Miller D.L."/>
        </authorList>
    </citation>
    <scope>NUCLEOTIDE SEQUENCE [GENOMIC DNA]</scope>
    <source>
        <strain>MoPn</strain>
    </source>
</reference>
<reference key="2">
    <citation type="journal article" date="2000" name="Nucleic Acids Res.">
        <title>Genome sequences of Chlamydia trachomatis MoPn and Chlamydia pneumoniae AR39.</title>
        <authorList>
            <person name="Read T.D."/>
            <person name="Brunham R.C."/>
            <person name="Shen C."/>
            <person name="Gill S.R."/>
            <person name="Heidelberg J.F."/>
            <person name="White O."/>
            <person name="Hickey E.K."/>
            <person name="Peterson J.D."/>
            <person name="Utterback T.R."/>
            <person name="Berry K.J."/>
            <person name="Bass S."/>
            <person name="Linher K.D."/>
            <person name="Weidman J.F."/>
            <person name="Khouri H.M."/>
            <person name="Craven B."/>
            <person name="Bowman C."/>
            <person name="Dodson R.J."/>
            <person name="Gwinn M.L."/>
            <person name="Nelson W.C."/>
            <person name="DeBoy R.T."/>
            <person name="Kolonay J.F."/>
            <person name="McClarty G."/>
            <person name="Salzberg S.L."/>
            <person name="Eisen J.A."/>
            <person name="Fraser C.M."/>
        </authorList>
    </citation>
    <scope>NUCLEOTIDE SEQUENCE [LARGE SCALE GENOMIC DNA]</scope>
    <source>
        <strain>MoPn / Nigg</strain>
    </source>
</reference>
<sequence length="245" mass="26325">MMKKRVKRVLFKISGEALSDASSSDKISEERLSRLIAELKVVRNADVEVAVVIGGGNILRGLSQSQNLQINRVSADQMGMLATLINGMALADALKTEDVPNLLTSTLSCPQLAELYNPQKASDALSQGKVVICTMGAGAPYLTTDTGAALRACELKVDVLLKATMHVDGVYDRDPREFADAVRYDHISYRDFLSQGLGAIDPSAVSLCMEAGIPIRMFSFTKHSLEEAIFNTVGTVISSTEGGQL</sequence>
<name>PYRH_CHLMU</name>
<evidence type="ECO:0000255" key="1">
    <source>
        <dbReference type="HAMAP-Rule" id="MF_01220"/>
    </source>
</evidence>
<gene>
    <name evidence="1" type="primary">pyrH</name>
    <name type="ordered locus">TC_0049</name>
</gene>
<keyword id="KW-0067">ATP-binding</keyword>
<keyword id="KW-0963">Cytoplasm</keyword>
<keyword id="KW-0418">Kinase</keyword>
<keyword id="KW-0547">Nucleotide-binding</keyword>
<keyword id="KW-0665">Pyrimidine biosynthesis</keyword>
<keyword id="KW-0808">Transferase</keyword>
<proteinExistence type="inferred from homology"/>